<protein>
    <recommendedName>
        <fullName evidence="1">Aspartate--tRNA(Asp/Asn) ligase</fullName>
        <ecNumber evidence="1">6.1.1.23</ecNumber>
    </recommendedName>
    <alternativeName>
        <fullName evidence="1">Aspartyl-tRNA synthetase</fullName>
        <shortName evidence="1">AspRS</shortName>
    </alternativeName>
    <alternativeName>
        <fullName evidence="1">Non-discriminating aspartyl-tRNA synthetase</fullName>
        <shortName evidence="1">ND-AspRS</shortName>
    </alternativeName>
</protein>
<name>SYDND_BRUA4</name>
<reference key="1">
    <citation type="journal article" date="2011" name="J. Bacteriol.">
        <title>Genome of Ochrobactrum anthropi ATCC 49188 T, a versatile opportunistic pathogen and symbiont of several eukaryotic hosts.</title>
        <authorList>
            <person name="Chain P.S."/>
            <person name="Lang D.M."/>
            <person name="Comerci D.J."/>
            <person name="Malfatti S.A."/>
            <person name="Vergez L.M."/>
            <person name="Shin M."/>
            <person name="Ugalde R.A."/>
            <person name="Garcia E."/>
            <person name="Tolmasky M.E."/>
        </authorList>
    </citation>
    <scope>NUCLEOTIDE SEQUENCE [LARGE SCALE GENOMIC DNA]</scope>
    <source>
        <strain>ATCC 49188 / DSM 6882 / CCUG 24695 / JCM 21032 / LMG 3331 / NBRC 15819 / NCTC 12168 / Alc 37</strain>
    </source>
</reference>
<comment type="function">
    <text evidence="1">Aspartyl-tRNA synthetase with relaxed tRNA specificity since it is able to aspartylate not only its cognate tRNA(Asp) but also tRNA(Asn). Reaction proceeds in two steps: L-aspartate is first activated by ATP to form Asp-AMP and then transferred to the acceptor end of tRNA(Asp/Asn).</text>
</comment>
<comment type="catalytic activity">
    <reaction evidence="1">
        <text>tRNA(Asx) + L-aspartate + ATP = L-aspartyl-tRNA(Asx) + AMP + diphosphate</text>
        <dbReference type="Rhea" id="RHEA:18349"/>
        <dbReference type="Rhea" id="RHEA-COMP:9710"/>
        <dbReference type="Rhea" id="RHEA-COMP:9711"/>
        <dbReference type="ChEBI" id="CHEBI:29991"/>
        <dbReference type="ChEBI" id="CHEBI:30616"/>
        <dbReference type="ChEBI" id="CHEBI:33019"/>
        <dbReference type="ChEBI" id="CHEBI:78442"/>
        <dbReference type="ChEBI" id="CHEBI:78516"/>
        <dbReference type="ChEBI" id="CHEBI:456215"/>
        <dbReference type="EC" id="6.1.1.23"/>
    </reaction>
</comment>
<comment type="subunit">
    <text evidence="1">Homodimer.</text>
</comment>
<comment type="subcellular location">
    <subcellularLocation>
        <location evidence="1">Cytoplasm</location>
    </subcellularLocation>
</comment>
<comment type="similarity">
    <text evidence="1">Belongs to the class-II aminoacyl-tRNA synthetase family. Type 1 subfamily.</text>
</comment>
<accession>A6X200</accession>
<keyword id="KW-0030">Aminoacyl-tRNA synthetase</keyword>
<keyword id="KW-0067">ATP-binding</keyword>
<keyword id="KW-0963">Cytoplasm</keyword>
<keyword id="KW-0436">Ligase</keyword>
<keyword id="KW-0547">Nucleotide-binding</keyword>
<keyword id="KW-0648">Protein biosynthesis</keyword>
<keyword id="KW-1185">Reference proteome</keyword>
<feature type="chain" id="PRO_1000006718" description="Aspartate--tRNA(Asp/Asn) ligase">
    <location>
        <begin position="1"/>
        <end position="595"/>
    </location>
</feature>
<feature type="region of interest" description="Aspartate" evidence="1">
    <location>
        <begin position="199"/>
        <end position="202"/>
    </location>
</feature>
<feature type="binding site" evidence="1">
    <location>
        <position position="175"/>
    </location>
    <ligand>
        <name>L-aspartate</name>
        <dbReference type="ChEBI" id="CHEBI:29991"/>
    </ligand>
</feature>
<feature type="binding site" evidence="1">
    <location>
        <begin position="221"/>
        <end position="223"/>
    </location>
    <ligand>
        <name>ATP</name>
        <dbReference type="ChEBI" id="CHEBI:30616"/>
    </ligand>
</feature>
<feature type="binding site" evidence="1">
    <location>
        <position position="221"/>
    </location>
    <ligand>
        <name>L-aspartate</name>
        <dbReference type="ChEBI" id="CHEBI:29991"/>
    </ligand>
</feature>
<feature type="binding site" evidence="1">
    <location>
        <position position="454"/>
    </location>
    <ligand>
        <name>L-aspartate</name>
        <dbReference type="ChEBI" id="CHEBI:29991"/>
    </ligand>
</feature>
<feature type="binding site" evidence="1">
    <location>
        <position position="488"/>
    </location>
    <ligand>
        <name>ATP</name>
        <dbReference type="ChEBI" id="CHEBI:30616"/>
    </ligand>
</feature>
<feature type="binding site" evidence="1">
    <location>
        <position position="495"/>
    </location>
    <ligand>
        <name>L-aspartate</name>
        <dbReference type="ChEBI" id="CHEBI:29991"/>
    </ligand>
</feature>
<feature type="binding site" evidence="1">
    <location>
        <begin position="540"/>
        <end position="543"/>
    </location>
    <ligand>
        <name>ATP</name>
        <dbReference type="ChEBI" id="CHEBI:30616"/>
    </ligand>
</feature>
<feature type="site" description="Important for tRNA non-discrimination" evidence="1">
    <location>
        <position position="33"/>
    </location>
</feature>
<evidence type="ECO:0000255" key="1">
    <source>
        <dbReference type="HAMAP-Rule" id="MF_00044"/>
    </source>
</evidence>
<sequence length="595" mass="67242">MHRYRSHTCAALRKTDVGSNVRLSGWVHRVRDHGGILFIDLRDHYGITQIVADPDSPAFKVAETVRGEWVIRVDGEVKARAGDAVNTNLPTGEVEIFATEIEVLAAAKELPLPVFGEPDYPEDIRLKYRFLDLRRETLHKNIMSRTKIIAAMRRRMTEIGFNEFTTPILTASSPEGARDFLVPSRIHEGKFYALPQAPQQYKQLLMVAGFDRYFQIAPCFRDEDPRADRLPGEFYQLDLEMSFVTQEEVWETMEPVMRGIFEEFAEGKPVTQQFRRIAYDDAIRTYGSDKPDLRNPIEMQAVTEHFAGSGFKVFANMIANDPKVEVWAIPAKTGGSRAFCDRMNSWAQSEGQPGLGYIFWRKEGDKLEGAGPIAKNIGEERTEAIRTQMGLEDGDACFFVAGLPSKFYKFAGDARTRAGEELNLVDRDRFELAWIIDFPFYEWDEDNKKLDFAHNPFSMPQGGMDALENQDPLAIKAYQYDLVCNGFEIASGSIRNQLPDVMVKAFEKVGLSQQDVEERFGGLYRAFQYGAPPHGGMAAGIDRVIMLLVGAKNLREISLFPMNQQALDLLMNAPSDVSPAQLRDLHIRLAPVQKS</sequence>
<dbReference type="EC" id="6.1.1.23" evidence="1"/>
<dbReference type="EMBL" id="CP000758">
    <property type="protein sequence ID" value="ABS15254.1"/>
    <property type="molecule type" value="Genomic_DNA"/>
</dbReference>
<dbReference type="RefSeq" id="WP_010661078.1">
    <property type="nucleotide sequence ID" value="NC_009667.1"/>
</dbReference>
<dbReference type="SMR" id="A6X200"/>
<dbReference type="STRING" id="439375.Oant_2541"/>
<dbReference type="GeneID" id="61317001"/>
<dbReference type="KEGG" id="oan:Oant_2541"/>
<dbReference type="PATRIC" id="fig|439375.7.peg.2675"/>
<dbReference type="eggNOG" id="COG0173">
    <property type="taxonomic scope" value="Bacteria"/>
</dbReference>
<dbReference type="HOGENOM" id="CLU_014330_3_2_5"/>
<dbReference type="PhylomeDB" id="A6X200"/>
<dbReference type="Proteomes" id="UP000002301">
    <property type="component" value="Chromosome 1"/>
</dbReference>
<dbReference type="GO" id="GO:0005737">
    <property type="term" value="C:cytoplasm"/>
    <property type="evidence" value="ECO:0007669"/>
    <property type="project" value="UniProtKB-SubCell"/>
</dbReference>
<dbReference type="GO" id="GO:0004815">
    <property type="term" value="F:aspartate-tRNA ligase activity"/>
    <property type="evidence" value="ECO:0007669"/>
    <property type="project" value="UniProtKB-UniRule"/>
</dbReference>
<dbReference type="GO" id="GO:0050560">
    <property type="term" value="F:aspartate-tRNA(Asn) ligase activity"/>
    <property type="evidence" value="ECO:0007669"/>
    <property type="project" value="UniProtKB-EC"/>
</dbReference>
<dbReference type="GO" id="GO:0005524">
    <property type="term" value="F:ATP binding"/>
    <property type="evidence" value="ECO:0007669"/>
    <property type="project" value="UniProtKB-UniRule"/>
</dbReference>
<dbReference type="GO" id="GO:0003676">
    <property type="term" value="F:nucleic acid binding"/>
    <property type="evidence" value="ECO:0007669"/>
    <property type="project" value="InterPro"/>
</dbReference>
<dbReference type="GO" id="GO:0006422">
    <property type="term" value="P:aspartyl-tRNA aminoacylation"/>
    <property type="evidence" value="ECO:0007669"/>
    <property type="project" value="UniProtKB-UniRule"/>
</dbReference>
<dbReference type="CDD" id="cd00777">
    <property type="entry name" value="AspRS_core"/>
    <property type="match status" value="1"/>
</dbReference>
<dbReference type="CDD" id="cd04317">
    <property type="entry name" value="EcAspRS_like_N"/>
    <property type="match status" value="1"/>
</dbReference>
<dbReference type="Gene3D" id="3.30.930.10">
    <property type="entry name" value="Bira Bifunctional Protein, Domain 2"/>
    <property type="match status" value="1"/>
</dbReference>
<dbReference type="Gene3D" id="3.30.1360.30">
    <property type="entry name" value="GAD-like domain"/>
    <property type="match status" value="1"/>
</dbReference>
<dbReference type="Gene3D" id="2.40.50.140">
    <property type="entry name" value="Nucleic acid-binding proteins"/>
    <property type="match status" value="1"/>
</dbReference>
<dbReference type="HAMAP" id="MF_00044">
    <property type="entry name" value="Asp_tRNA_synth_type1"/>
    <property type="match status" value="1"/>
</dbReference>
<dbReference type="InterPro" id="IPR004364">
    <property type="entry name" value="Aa-tRNA-synt_II"/>
</dbReference>
<dbReference type="InterPro" id="IPR006195">
    <property type="entry name" value="aa-tRNA-synth_II"/>
</dbReference>
<dbReference type="InterPro" id="IPR045864">
    <property type="entry name" value="aa-tRNA-synth_II/BPL/LPL"/>
</dbReference>
<dbReference type="InterPro" id="IPR004524">
    <property type="entry name" value="Asp-tRNA-ligase_1"/>
</dbReference>
<dbReference type="InterPro" id="IPR047089">
    <property type="entry name" value="Asp-tRNA-ligase_1_N"/>
</dbReference>
<dbReference type="InterPro" id="IPR002312">
    <property type="entry name" value="Asp/Asn-tRNA-synth_IIb"/>
</dbReference>
<dbReference type="InterPro" id="IPR047090">
    <property type="entry name" value="AspRS_core"/>
</dbReference>
<dbReference type="InterPro" id="IPR004115">
    <property type="entry name" value="GAD-like_sf"/>
</dbReference>
<dbReference type="InterPro" id="IPR029351">
    <property type="entry name" value="GAD_dom"/>
</dbReference>
<dbReference type="InterPro" id="IPR012340">
    <property type="entry name" value="NA-bd_OB-fold"/>
</dbReference>
<dbReference type="InterPro" id="IPR004365">
    <property type="entry name" value="NA-bd_OB_tRNA"/>
</dbReference>
<dbReference type="NCBIfam" id="TIGR00459">
    <property type="entry name" value="aspS_bact"/>
    <property type="match status" value="1"/>
</dbReference>
<dbReference type="NCBIfam" id="NF001750">
    <property type="entry name" value="PRK00476.1"/>
    <property type="match status" value="1"/>
</dbReference>
<dbReference type="PANTHER" id="PTHR22594:SF5">
    <property type="entry name" value="ASPARTATE--TRNA LIGASE, MITOCHONDRIAL"/>
    <property type="match status" value="1"/>
</dbReference>
<dbReference type="PANTHER" id="PTHR22594">
    <property type="entry name" value="ASPARTYL/LYSYL-TRNA SYNTHETASE"/>
    <property type="match status" value="1"/>
</dbReference>
<dbReference type="Pfam" id="PF02938">
    <property type="entry name" value="GAD"/>
    <property type="match status" value="1"/>
</dbReference>
<dbReference type="Pfam" id="PF00152">
    <property type="entry name" value="tRNA-synt_2"/>
    <property type="match status" value="1"/>
</dbReference>
<dbReference type="Pfam" id="PF01336">
    <property type="entry name" value="tRNA_anti-codon"/>
    <property type="match status" value="1"/>
</dbReference>
<dbReference type="PRINTS" id="PR01042">
    <property type="entry name" value="TRNASYNTHASP"/>
</dbReference>
<dbReference type="SUPFAM" id="SSF55681">
    <property type="entry name" value="Class II aaRS and biotin synthetases"/>
    <property type="match status" value="1"/>
</dbReference>
<dbReference type="SUPFAM" id="SSF55261">
    <property type="entry name" value="GAD domain-like"/>
    <property type="match status" value="1"/>
</dbReference>
<dbReference type="SUPFAM" id="SSF50249">
    <property type="entry name" value="Nucleic acid-binding proteins"/>
    <property type="match status" value="1"/>
</dbReference>
<dbReference type="PROSITE" id="PS50862">
    <property type="entry name" value="AA_TRNA_LIGASE_II"/>
    <property type="match status" value="1"/>
</dbReference>
<gene>
    <name evidence="1" type="primary">aspS</name>
    <name type="ordered locus">Oant_2541</name>
</gene>
<organism>
    <name type="scientific">Brucella anthropi (strain ATCC 49188 / DSM 6882 / CCUG 24695 / JCM 21032 / LMG 3331 / NBRC 15819 / NCTC 12168 / Alc 37)</name>
    <name type="common">Ochrobactrum anthropi</name>
    <dbReference type="NCBI Taxonomy" id="439375"/>
    <lineage>
        <taxon>Bacteria</taxon>
        <taxon>Pseudomonadati</taxon>
        <taxon>Pseudomonadota</taxon>
        <taxon>Alphaproteobacteria</taxon>
        <taxon>Hyphomicrobiales</taxon>
        <taxon>Brucellaceae</taxon>
        <taxon>Brucella/Ochrobactrum group</taxon>
        <taxon>Brucella</taxon>
    </lineage>
</organism>
<proteinExistence type="inferred from homology"/>